<accession>Q5LS25</accession>
<evidence type="ECO:0000255" key="1">
    <source>
        <dbReference type="HAMAP-Rule" id="MF_00328"/>
    </source>
</evidence>
<feature type="chain" id="PRO_0000266403" description="Guanylate kinase">
    <location>
        <begin position="1"/>
        <end position="213"/>
    </location>
</feature>
<feature type="domain" description="Guanylate kinase-like" evidence="1">
    <location>
        <begin position="6"/>
        <end position="186"/>
    </location>
</feature>
<feature type="binding site" evidence="1">
    <location>
        <begin position="13"/>
        <end position="20"/>
    </location>
    <ligand>
        <name>ATP</name>
        <dbReference type="ChEBI" id="CHEBI:30616"/>
    </ligand>
</feature>
<keyword id="KW-0067">ATP-binding</keyword>
<keyword id="KW-0963">Cytoplasm</keyword>
<keyword id="KW-0418">Kinase</keyword>
<keyword id="KW-0547">Nucleotide-binding</keyword>
<keyword id="KW-1185">Reference proteome</keyword>
<keyword id="KW-0808">Transferase</keyword>
<dbReference type="EC" id="2.7.4.8" evidence="1"/>
<dbReference type="EMBL" id="CP000031">
    <property type="protein sequence ID" value="AAV95221.1"/>
    <property type="molecule type" value="Genomic_DNA"/>
</dbReference>
<dbReference type="RefSeq" id="WP_011047676.1">
    <property type="nucleotide sequence ID" value="NC_003911.12"/>
</dbReference>
<dbReference type="SMR" id="Q5LS25"/>
<dbReference type="STRING" id="246200.SPO1945"/>
<dbReference type="PaxDb" id="246200-SPO1945"/>
<dbReference type="KEGG" id="sil:SPO1945"/>
<dbReference type="eggNOG" id="COG0194">
    <property type="taxonomic scope" value="Bacteria"/>
</dbReference>
<dbReference type="HOGENOM" id="CLU_001715_1_0_5"/>
<dbReference type="OrthoDB" id="9808150at2"/>
<dbReference type="Proteomes" id="UP000001023">
    <property type="component" value="Chromosome"/>
</dbReference>
<dbReference type="GO" id="GO:0005829">
    <property type="term" value="C:cytosol"/>
    <property type="evidence" value="ECO:0007669"/>
    <property type="project" value="TreeGrafter"/>
</dbReference>
<dbReference type="GO" id="GO:0005524">
    <property type="term" value="F:ATP binding"/>
    <property type="evidence" value="ECO:0007669"/>
    <property type="project" value="UniProtKB-UniRule"/>
</dbReference>
<dbReference type="GO" id="GO:0004385">
    <property type="term" value="F:guanylate kinase activity"/>
    <property type="evidence" value="ECO:0007669"/>
    <property type="project" value="UniProtKB-UniRule"/>
</dbReference>
<dbReference type="CDD" id="cd00071">
    <property type="entry name" value="GMPK"/>
    <property type="match status" value="1"/>
</dbReference>
<dbReference type="FunFam" id="3.30.63.10:FF:000002">
    <property type="entry name" value="Guanylate kinase 1"/>
    <property type="match status" value="1"/>
</dbReference>
<dbReference type="Gene3D" id="3.30.63.10">
    <property type="entry name" value="Guanylate Kinase phosphate binding domain"/>
    <property type="match status" value="1"/>
</dbReference>
<dbReference type="Gene3D" id="3.40.50.300">
    <property type="entry name" value="P-loop containing nucleotide triphosphate hydrolases"/>
    <property type="match status" value="1"/>
</dbReference>
<dbReference type="HAMAP" id="MF_00328">
    <property type="entry name" value="Guanylate_kinase"/>
    <property type="match status" value="1"/>
</dbReference>
<dbReference type="InterPro" id="IPR008145">
    <property type="entry name" value="GK/Ca_channel_bsu"/>
</dbReference>
<dbReference type="InterPro" id="IPR008144">
    <property type="entry name" value="Guanylate_kin-like_dom"/>
</dbReference>
<dbReference type="InterPro" id="IPR017665">
    <property type="entry name" value="Guanylate_kinase"/>
</dbReference>
<dbReference type="InterPro" id="IPR020590">
    <property type="entry name" value="Guanylate_kinase_CS"/>
</dbReference>
<dbReference type="InterPro" id="IPR027417">
    <property type="entry name" value="P-loop_NTPase"/>
</dbReference>
<dbReference type="NCBIfam" id="TIGR03263">
    <property type="entry name" value="guanyl_kin"/>
    <property type="match status" value="1"/>
</dbReference>
<dbReference type="PANTHER" id="PTHR23117:SF13">
    <property type="entry name" value="GUANYLATE KINASE"/>
    <property type="match status" value="1"/>
</dbReference>
<dbReference type="PANTHER" id="PTHR23117">
    <property type="entry name" value="GUANYLATE KINASE-RELATED"/>
    <property type="match status" value="1"/>
</dbReference>
<dbReference type="Pfam" id="PF00625">
    <property type="entry name" value="Guanylate_kin"/>
    <property type="match status" value="1"/>
</dbReference>
<dbReference type="SMART" id="SM00072">
    <property type="entry name" value="GuKc"/>
    <property type="match status" value="1"/>
</dbReference>
<dbReference type="SUPFAM" id="SSF52540">
    <property type="entry name" value="P-loop containing nucleoside triphosphate hydrolases"/>
    <property type="match status" value="1"/>
</dbReference>
<dbReference type="PROSITE" id="PS00856">
    <property type="entry name" value="GUANYLATE_KINASE_1"/>
    <property type="match status" value="1"/>
</dbReference>
<dbReference type="PROSITE" id="PS50052">
    <property type="entry name" value="GUANYLATE_KINASE_2"/>
    <property type="match status" value="1"/>
</dbReference>
<name>KGUA_RUEPO</name>
<protein>
    <recommendedName>
        <fullName evidence="1">Guanylate kinase</fullName>
        <ecNumber evidence="1">2.7.4.8</ecNumber>
    </recommendedName>
    <alternativeName>
        <fullName evidence="1">GMP kinase</fullName>
    </alternativeName>
</protein>
<organism>
    <name type="scientific">Ruegeria pomeroyi (strain ATCC 700808 / DSM 15171 / DSS-3)</name>
    <name type="common">Silicibacter pomeroyi</name>
    <dbReference type="NCBI Taxonomy" id="246200"/>
    <lineage>
        <taxon>Bacteria</taxon>
        <taxon>Pseudomonadati</taxon>
        <taxon>Pseudomonadota</taxon>
        <taxon>Alphaproteobacteria</taxon>
        <taxon>Rhodobacterales</taxon>
        <taxon>Roseobacteraceae</taxon>
        <taxon>Ruegeria</taxon>
    </lineage>
</organism>
<reference key="1">
    <citation type="journal article" date="2004" name="Nature">
        <title>Genome sequence of Silicibacter pomeroyi reveals adaptations to the marine environment.</title>
        <authorList>
            <person name="Moran M.A."/>
            <person name="Buchan A."/>
            <person name="Gonzalez J.M."/>
            <person name="Heidelberg J.F."/>
            <person name="Whitman W.B."/>
            <person name="Kiene R.P."/>
            <person name="Henriksen J.R."/>
            <person name="King G.M."/>
            <person name="Belas R."/>
            <person name="Fuqua C."/>
            <person name="Brinkac L.M."/>
            <person name="Lewis M."/>
            <person name="Johri S."/>
            <person name="Weaver B."/>
            <person name="Pai G."/>
            <person name="Eisen J.A."/>
            <person name="Rahe E."/>
            <person name="Sheldon W.M."/>
            <person name="Ye W."/>
            <person name="Miller T.R."/>
            <person name="Carlton J."/>
            <person name="Rasko D.A."/>
            <person name="Paulsen I.T."/>
            <person name="Ren Q."/>
            <person name="Daugherty S.C."/>
            <person name="DeBoy R.T."/>
            <person name="Dodson R.J."/>
            <person name="Durkin A.S."/>
            <person name="Madupu R."/>
            <person name="Nelson W.C."/>
            <person name="Sullivan S.A."/>
            <person name="Rosovitz M.J."/>
            <person name="Haft D.H."/>
            <person name="Selengut J."/>
            <person name="Ward N."/>
        </authorList>
    </citation>
    <scope>NUCLEOTIDE SEQUENCE [LARGE SCALE GENOMIC DNA]</scope>
    <source>
        <strain>ATCC 700808 / DSM 15171 / DSS-3</strain>
    </source>
</reference>
<reference key="2">
    <citation type="journal article" date="2014" name="Stand. Genomic Sci.">
        <title>An updated genome annotation for the model marine bacterium Ruegeria pomeroyi DSS-3.</title>
        <authorList>
            <person name="Rivers A.R."/>
            <person name="Smith C.B."/>
            <person name="Moran M.A."/>
        </authorList>
    </citation>
    <scope>GENOME REANNOTATION</scope>
    <source>
        <strain>ATCC 700808 / DSM 15171 / DSS-3</strain>
    </source>
</reference>
<proteinExistence type="inferred from homology"/>
<comment type="function">
    <text evidence="1">Essential for recycling GMP and indirectly, cGMP.</text>
</comment>
<comment type="catalytic activity">
    <reaction evidence="1">
        <text>GMP + ATP = GDP + ADP</text>
        <dbReference type="Rhea" id="RHEA:20780"/>
        <dbReference type="ChEBI" id="CHEBI:30616"/>
        <dbReference type="ChEBI" id="CHEBI:58115"/>
        <dbReference type="ChEBI" id="CHEBI:58189"/>
        <dbReference type="ChEBI" id="CHEBI:456216"/>
        <dbReference type="EC" id="2.7.4.8"/>
    </reaction>
</comment>
<comment type="subcellular location">
    <subcellularLocation>
        <location evidence="1">Cytoplasm</location>
    </subcellularLocation>
</comment>
<comment type="similarity">
    <text evidence="1">Belongs to the guanylate kinase family.</text>
</comment>
<gene>
    <name evidence="1" type="primary">gmk</name>
    <name type="ordered locus">SPO1945</name>
</gene>
<sequence>MTDRRGLLIILSSPSGAGKSTLARRLMSWDPGLKFSVSATTRAPRPGEEHGREYYFLSEDQFKGQVRRGEMLEHAHVFGNFYGSPAGPVRDTIEAGQDVLFDVDWQGEIQIRNSDLGKHALSIFILPPSIKELRRRLESRGQDSAEVISRRMLKSWDEISHWGYYDYVLINDDLDATEERLKTIVSAERMRRIQQPALQEHVRKLQSEFEDLS</sequence>